<gene>
    <name evidence="1" type="primary">aspS</name>
    <name type="ordered locus">cgR_1683</name>
</gene>
<reference key="1">
    <citation type="journal article" date="2007" name="Microbiology">
        <title>Comparative analysis of the Corynebacterium glutamicum group and complete genome sequence of strain R.</title>
        <authorList>
            <person name="Yukawa H."/>
            <person name="Omumasaba C.A."/>
            <person name="Nonaka H."/>
            <person name="Kos P."/>
            <person name="Okai N."/>
            <person name="Suzuki N."/>
            <person name="Suda M."/>
            <person name="Tsuge Y."/>
            <person name="Watanabe J."/>
            <person name="Ikeda Y."/>
            <person name="Vertes A.A."/>
            <person name="Inui M."/>
        </authorList>
    </citation>
    <scope>NUCLEOTIDE SEQUENCE [LARGE SCALE GENOMIC DNA]</scope>
    <source>
        <strain>R</strain>
    </source>
</reference>
<protein>
    <recommendedName>
        <fullName evidence="1">Aspartate--tRNA(Asp/Asn) ligase</fullName>
        <ecNumber evidence="1">6.1.1.23</ecNumber>
    </recommendedName>
    <alternativeName>
        <fullName evidence="1">Aspartyl-tRNA synthetase</fullName>
        <shortName evidence="1">AspRS</shortName>
    </alternativeName>
    <alternativeName>
        <fullName evidence="1">Non-discriminating aspartyl-tRNA synthetase</fullName>
        <shortName evidence="1">ND-AspRS</shortName>
    </alternativeName>
</protein>
<feature type="chain" id="PRO_1000006667" description="Aspartate--tRNA(Asp/Asn) ligase">
    <location>
        <begin position="1"/>
        <end position="608"/>
    </location>
</feature>
<feature type="region of interest" description="Aspartate" evidence="1">
    <location>
        <begin position="199"/>
        <end position="202"/>
    </location>
</feature>
<feature type="region of interest" description="Disordered" evidence="2">
    <location>
        <begin position="566"/>
        <end position="608"/>
    </location>
</feature>
<feature type="compositionally biased region" description="Basic and acidic residues" evidence="2">
    <location>
        <begin position="580"/>
        <end position="596"/>
    </location>
</feature>
<feature type="binding site" evidence="1">
    <location>
        <position position="175"/>
    </location>
    <ligand>
        <name>L-aspartate</name>
        <dbReference type="ChEBI" id="CHEBI:29991"/>
    </ligand>
</feature>
<feature type="binding site" evidence="1">
    <location>
        <begin position="221"/>
        <end position="223"/>
    </location>
    <ligand>
        <name>ATP</name>
        <dbReference type="ChEBI" id="CHEBI:30616"/>
    </ligand>
</feature>
<feature type="binding site" evidence="1">
    <location>
        <position position="221"/>
    </location>
    <ligand>
        <name>L-aspartate</name>
        <dbReference type="ChEBI" id="CHEBI:29991"/>
    </ligand>
</feature>
<feature type="binding site" evidence="1">
    <location>
        <position position="230"/>
    </location>
    <ligand>
        <name>ATP</name>
        <dbReference type="ChEBI" id="CHEBI:30616"/>
    </ligand>
</feature>
<feature type="binding site" evidence="1">
    <location>
        <position position="453"/>
    </location>
    <ligand>
        <name>L-aspartate</name>
        <dbReference type="ChEBI" id="CHEBI:29991"/>
    </ligand>
</feature>
<feature type="binding site" evidence="1">
    <location>
        <position position="487"/>
    </location>
    <ligand>
        <name>ATP</name>
        <dbReference type="ChEBI" id="CHEBI:30616"/>
    </ligand>
</feature>
<feature type="binding site" evidence="1">
    <location>
        <position position="494"/>
    </location>
    <ligand>
        <name>L-aspartate</name>
        <dbReference type="ChEBI" id="CHEBI:29991"/>
    </ligand>
</feature>
<feature type="binding site" evidence="1">
    <location>
        <begin position="539"/>
        <end position="542"/>
    </location>
    <ligand>
        <name>ATP</name>
        <dbReference type="ChEBI" id="CHEBI:30616"/>
    </ligand>
</feature>
<feature type="site" description="Important for tRNA non-discrimination" evidence="1">
    <location>
        <position position="31"/>
    </location>
</feature>
<feature type="site" description="Important for tRNA non-discrimination" evidence="1">
    <location>
        <position position="80"/>
    </location>
</feature>
<comment type="function">
    <text evidence="1">Aspartyl-tRNA synthetase with relaxed tRNA specificity since it is able to aspartylate not only its cognate tRNA(Asp) but also tRNA(Asn). Reaction proceeds in two steps: L-aspartate is first activated by ATP to form Asp-AMP and then transferred to the acceptor end of tRNA(Asp/Asn).</text>
</comment>
<comment type="catalytic activity">
    <reaction evidence="1">
        <text>tRNA(Asx) + L-aspartate + ATP = L-aspartyl-tRNA(Asx) + AMP + diphosphate</text>
        <dbReference type="Rhea" id="RHEA:18349"/>
        <dbReference type="Rhea" id="RHEA-COMP:9710"/>
        <dbReference type="Rhea" id="RHEA-COMP:9711"/>
        <dbReference type="ChEBI" id="CHEBI:29991"/>
        <dbReference type="ChEBI" id="CHEBI:30616"/>
        <dbReference type="ChEBI" id="CHEBI:33019"/>
        <dbReference type="ChEBI" id="CHEBI:78442"/>
        <dbReference type="ChEBI" id="CHEBI:78516"/>
        <dbReference type="ChEBI" id="CHEBI:456215"/>
        <dbReference type="EC" id="6.1.1.23"/>
    </reaction>
</comment>
<comment type="subunit">
    <text evidence="1">Homodimer.</text>
</comment>
<comment type="subcellular location">
    <subcellularLocation>
        <location evidence="1">Cytoplasm</location>
    </subcellularLocation>
</comment>
<comment type="similarity">
    <text evidence="1">Belongs to the class-II aminoacyl-tRNA synthetase family. Type 1 subfamily.</text>
</comment>
<organism>
    <name type="scientific">Corynebacterium glutamicum (strain R)</name>
    <dbReference type="NCBI Taxonomy" id="340322"/>
    <lineage>
        <taxon>Bacteria</taxon>
        <taxon>Bacillati</taxon>
        <taxon>Actinomycetota</taxon>
        <taxon>Actinomycetes</taxon>
        <taxon>Mycobacteriales</taxon>
        <taxon>Corynebacteriaceae</taxon>
        <taxon>Corynebacterium</taxon>
    </lineage>
</organism>
<evidence type="ECO:0000255" key="1">
    <source>
        <dbReference type="HAMAP-Rule" id="MF_00044"/>
    </source>
</evidence>
<evidence type="ECO:0000256" key="2">
    <source>
        <dbReference type="SAM" id="MobiDB-lite"/>
    </source>
</evidence>
<accession>A4QEL0</accession>
<keyword id="KW-0030">Aminoacyl-tRNA synthetase</keyword>
<keyword id="KW-0067">ATP-binding</keyword>
<keyword id="KW-0963">Cytoplasm</keyword>
<keyword id="KW-0436">Ligase</keyword>
<keyword id="KW-0547">Nucleotide-binding</keyword>
<keyword id="KW-0648">Protein biosynthesis</keyword>
<sequence length="608" mass="67053">MLRTHLSGELRKENAGQSVTLTGWVNRRRDHGGVIFIDLRDRTGIAQVVFRNEDVAERAHALRSEFVLRVTGVVEERPEGSQNPNLASGDIEVSVTEFEVLNESAPLPFQIEDSSSAGEVGEETRLKYRYLDLRRPVQANALRLRSAANKAARTVLDSHDFTEIETPTLTRSTPEGARDFLVPARLRPGTFYALPQSPQLFKQLLQVAGMERYYQIARCYRDEDFRADRQPEFTQLDVEMSFVDQDDVIALGEEIISEVWKLIGYEIKTPIPRMTYADAMRRYGSDKPDLRFDIEITECTEFFQDTTFRVFKNEYVGAVVMTGGASQPRRQLDAWQEWAKQRGAKGLAYILVGEDGELSGPVAKNITDAERAGIAAHVGAQPGDCIFFAAGDTKSSRALLGAARGEIAKKLDLIKEGDWAFTWIVDAPMFEPAADATASGDVALGNSKWTAVHHAFTSPKPEFLDNFDTNPGDALAYAYDIVCNGNEIGGGSIRIHQRDVQERVFEVMGITGEEAREKFGFLLDAFAFGAPPHGGIAFGWDRIVSLLGGFDSIRDVIAFPKSGGGIDPLTDAPAAITPQQRKEAGIDAKPKPKAEAQAEAQAEESAEK</sequence>
<name>SYDND_CORGB</name>
<dbReference type="EC" id="6.1.1.23" evidence="1"/>
<dbReference type="EMBL" id="AP009044">
    <property type="protein sequence ID" value="BAF54676.1"/>
    <property type="molecule type" value="Genomic_DNA"/>
</dbReference>
<dbReference type="RefSeq" id="WP_011897325.1">
    <property type="nucleotide sequence ID" value="NC_009342.1"/>
</dbReference>
<dbReference type="SMR" id="A4QEL0"/>
<dbReference type="KEGG" id="cgt:cgR_1683"/>
<dbReference type="HOGENOM" id="CLU_014330_3_2_11"/>
<dbReference type="PhylomeDB" id="A4QEL0"/>
<dbReference type="Proteomes" id="UP000006698">
    <property type="component" value="Chromosome"/>
</dbReference>
<dbReference type="GO" id="GO:0005737">
    <property type="term" value="C:cytoplasm"/>
    <property type="evidence" value="ECO:0007669"/>
    <property type="project" value="UniProtKB-SubCell"/>
</dbReference>
<dbReference type="GO" id="GO:0004815">
    <property type="term" value="F:aspartate-tRNA ligase activity"/>
    <property type="evidence" value="ECO:0007669"/>
    <property type="project" value="UniProtKB-UniRule"/>
</dbReference>
<dbReference type="GO" id="GO:0050560">
    <property type="term" value="F:aspartate-tRNA(Asn) ligase activity"/>
    <property type="evidence" value="ECO:0007669"/>
    <property type="project" value="UniProtKB-EC"/>
</dbReference>
<dbReference type="GO" id="GO:0005524">
    <property type="term" value="F:ATP binding"/>
    <property type="evidence" value="ECO:0007669"/>
    <property type="project" value="UniProtKB-UniRule"/>
</dbReference>
<dbReference type="GO" id="GO:0003676">
    <property type="term" value="F:nucleic acid binding"/>
    <property type="evidence" value="ECO:0007669"/>
    <property type="project" value="InterPro"/>
</dbReference>
<dbReference type="GO" id="GO:0006422">
    <property type="term" value="P:aspartyl-tRNA aminoacylation"/>
    <property type="evidence" value="ECO:0007669"/>
    <property type="project" value="UniProtKB-UniRule"/>
</dbReference>
<dbReference type="CDD" id="cd00777">
    <property type="entry name" value="AspRS_core"/>
    <property type="match status" value="1"/>
</dbReference>
<dbReference type="CDD" id="cd04317">
    <property type="entry name" value="EcAspRS_like_N"/>
    <property type="match status" value="1"/>
</dbReference>
<dbReference type="Gene3D" id="3.30.930.10">
    <property type="entry name" value="Bira Bifunctional Protein, Domain 2"/>
    <property type="match status" value="1"/>
</dbReference>
<dbReference type="Gene3D" id="3.30.1360.30">
    <property type="entry name" value="GAD-like domain"/>
    <property type="match status" value="1"/>
</dbReference>
<dbReference type="Gene3D" id="2.40.50.140">
    <property type="entry name" value="Nucleic acid-binding proteins"/>
    <property type="match status" value="1"/>
</dbReference>
<dbReference type="HAMAP" id="MF_00044">
    <property type="entry name" value="Asp_tRNA_synth_type1"/>
    <property type="match status" value="1"/>
</dbReference>
<dbReference type="InterPro" id="IPR004364">
    <property type="entry name" value="Aa-tRNA-synt_II"/>
</dbReference>
<dbReference type="InterPro" id="IPR006195">
    <property type="entry name" value="aa-tRNA-synth_II"/>
</dbReference>
<dbReference type="InterPro" id="IPR045864">
    <property type="entry name" value="aa-tRNA-synth_II/BPL/LPL"/>
</dbReference>
<dbReference type="InterPro" id="IPR004524">
    <property type="entry name" value="Asp-tRNA-ligase_1"/>
</dbReference>
<dbReference type="InterPro" id="IPR047089">
    <property type="entry name" value="Asp-tRNA-ligase_1_N"/>
</dbReference>
<dbReference type="InterPro" id="IPR002312">
    <property type="entry name" value="Asp/Asn-tRNA-synth_IIb"/>
</dbReference>
<dbReference type="InterPro" id="IPR047090">
    <property type="entry name" value="AspRS_core"/>
</dbReference>
<dbReference type="InterPro" id="IPR004115">
    <property type="entry name" value="GAD-like_sf"/>
</dbReference>
<dbReference type="InterPro" id="IPR029351">
    <property type="entry name" value="GAD_dom"/>
</dbReference>
<dbReference type="InterPro" id="IPR012340">
    <property type="entry name" value="NA-bd_OB-fold"/>
</dbReference>
<dbReference type="InterPro" id="IPR004365">
    <property type="entry name" value="NA-bd_OB_tRNA"/>
</dbReference>
<dbReference type="NCBIfam" id="TIGR00459">
    <property type="entry name" value="aspS_bact"/>
    <property type="match status" value="1"/>
</dbReference>
<dbReference type="NCBIfam" id="NF001750">
    <property type="entry name" value="PRK00476.1"/>
    <property type="match status" value="1"/>
</dbReference>
<dbReference type="PANTHER" id="PTHR22594:SF5">
    <property type="entry name" value="ASPARTATE--TRNA LIGASE, MITOCHONDRIAL"/>
    <property type="match status" value="1"/>
</dbReference>
<dbReference type="PANTHER" id="PTHR22594">
    <property type="entry name" value="ASPARTYL/LYSYL-TRNA SYNTHETASE"/>
    <property type="match status" value="1"/>
</dbReference>
<dbReference type="Pfam" id="PF02938">
    <property type="entry name" value="GAD"/>
    <property type="match status" value="1"/>
</dbReference>
<dbReference type="Pfam" id="PF00152">
    <property type="entry name" value="tRNA-synt_2"/>
    <property type="match status" value="1"/>
</dbReference>
<dbReference type="Pfam" id="PF01336">
    <property type="entry name" value="tRNA_anti-codon"/>
    <property type="match status" value="1"/>
</dbReference>
<dbReference type="PRINTS" id="PR01042">
    <property type="entry name" value="TRNASYNTHASP"/>
</dbReference>
<dbReference type="SUPFAM" id="SSF55681">
    <property type="entry name" value="Class II aaRS and biotin synthetases"/>
    <property type="match status" value="1"/>
</dbReference>
<dbReference type="SUPFAM" id="SSF55261">
    <property type="entry name" value="GAD domain-like"/>
    <property type="match status" value="1"/>
</dbReference>
<dbReference type="SUPFAM" id="SSF50249">
    <property type="entry name" value="Nucleic acid-binding proteins"/>
    <property type="match status" value="1"/>
</dbReference>
<dbReference type="PROSITE" id="PS50862">
    <property type="entry name" value="AA_TRNA_LIGASE_II"/>
    <property type="match status" value="1"/>
</dbReference>
<proteinExistence type="inferred from homology"/>